<name>DXS_FRAP2</name>
<evidence type="ECO:0000255" key="1">
    <source>
        <dbReference type="HAMAP-Rule" id="MF_00315"/>
    </source>
</evidence>
<organism>
    <name type="scientific">Francisella philomiragia subsp. philomiragia (strain ATCC 25017 / CCUG 19701 / FSC 153 / O#319-036)</name>
    <dbReference type="NCBI Taxonomy" id="484022"/>
    <lineage>
        <taxon>Bacteria</taxon>
        <taxon>Pseudomonadati</taxon>
        <taxon>Pseudomonadota</taxon>
        <taxon>Gammaproteobacteria</taxon>
        <taxon>Thiotrichales</taxon>
        <taxon>Francisellaceae</taxon>
        <taxon>Francisella</taxon>
    </lineage>
</organism>
<accession>B0U0B3</accession>
<sequence>MSKYTILDKINTPSDLKLVPEGQLKELASELRTFLVDTLDVSGGHFASSLGATELTVALHYVFNTPYDNIVWDVGHQTYIHKILTGRKDKLITIKKDGGISGFPKRSESEYDTFGVGHSSTSISAALGMAIADRLQGKHSSSIAVIGDGAITGGMAFEALNHAGGIKEDILVILNDNEMSISDNVGGLSAHFSKIISGGFYNSIREKGKEVLKNIPPMFEFVKKIETQTKGMFVPANFFEDLGFYYVGPIDGHNVVELVKTLRILKDHKGPKLLHVITKKGKGYTKAESDPIKFHHVAPSFHSGDAQSKASKPTYSNIFGNWICQKAAKDKRLVGVTPAMKEGSDLIRFSQQYPNRYFDVAIAEQHAVTFAGGLACQGLKPVVAIYSTFLQRAYDQVIHDIALQDLDVLYAVDRAGLVGADGATHDGSFDISFMRCIPNHVIMTPSDENETYHMLELGYEYKGPAMVRYPRGAGIGAEITDNLDIKLGKAKLVKKGSRVAILNFGTLLPLANQLADKYHITVVDMRFVKPLDEQMINQICQNHNIVFTLEESSIAGGAGSAVNEYIFANDLSKNITVRNFGLKDEFLTHGTKDLLLDYSNLSFNKIAEVLEKLLSHKK</sequence>
<gene>
    <name evidence="1" type="primary">dxs</name>
    <name type="ordered locus">Fphi_1718</name>
</gene>
<keyword id="KW-0414">Isoprene biosynthesis</keyword>
<keyword id="KW-0460">Magnesium</keyword>
<keyword id="KW-0479">Metal-binding</keyword>
<keyword id="KW-0784">Thiamine biosynthesis</keyword>
<keyword id="KW-0786">Thiamine pyrophosphate</keyword>
<keyword id="KW-0808">Transferase</keyword>
<protein>
    <recommendedName>
        <fullName evidence="1">1-deoxy-D-xylulose-5-phosphate synthase</fullName>
        <ecNumber evidence="1">2.2.1.7</ecNumber>
    </recommendedName>
    <alternativeName>
        <fullName evidence="1">1-deoxyxylulose-5-phosphate synthase</fullName>
        <shortName evidence="1">DXP synthase</shortName>
        <shortName evidence="1">DXPS</shortName>
    </alternativeName>
</protein>
<dbReference type="EC" id="2.2.1.7" evidence="1"/>
<dbReference type="EMBL" id="CP000937">
    <property type="protein sequence ID" value="ABZ87943.1"/>
    <property type="molecule type" value="Genomic_DNA"/>
</dbReference>
<dbReference type="SMR" id="B0U0B3"/>
<dbReference type="KEGG" id="fph:Fphi_1718"/>
<dbReference type="eggNOG" id="COG1154">
    <property type="taxonomic scope" value="Bacteria"/>
</dbReference>
<dbReference type="HOGENOM" id="CLU_009227_1_4_6"/>
<dbReference type="UniPathway" id="UPA00064">
    <property type="reaction ID" value="UER00091"/>
</dbReference>
<dbReference type="GO" id="GO:0005829">
    <property type="term" value="C:cytosol"/>
    <property type="evidence" value="ECO:0007669"/>
    <property type="project" value="TreeGrafter"/>
</dbReference>
<dbReference type="GO" id="GO:0008661">
    <property type="term" value="F:1-deoxy-D-xylulose-5-phosphate synthase activity"/>
    <property type="evidence" value="ECO:0007669"/>
    <property type="project" value="UniProtKB-UniRule"/>
</dbReference>
<dbReference type="GO" id="GO:0000287">
    <property type="term" value="F:magnesium ion binding"/>
    <property type="evidence" value="ECO:0007669"/>
    <property type="project" value="UniProtKB-UniRule"/>
</dbReference>
<dbReference type="GO" id="GO:0030976">
    <property type="term" value="F:thiamine pyrophosphate binding"/>
    <property type="evidence" value="ECO:0007669"/>
    <property type="project" value="UniProtKB-UniRule"/>
</dbReference>
<dbReference type="GO" id="GO:0052865">
    <property type="term" value="P:1-deoxy-D-xylulose 5-phosphate biosynthetic process"/>
    <property type="evidence" value="ECO:0007669"/>
    <property type="project" value="UniProtKB-UniPathway"/>
</dbReference>
<dbReference type="GO" id="GO:0019288">
    <property type="term" value="P:isopentenyl diphosphate biosynthetic process, methylerythritol 4-phosphate pathway"/>
    <property type="evidence" value="ECO:0007669"/>
    <property type="project" value="TreeGrafter"/>
</dbReference>
<dbReference type="GO" id="GO:0016114">
    <property type="term" value="P:terpenoid biosynthetic process"/>
    <property type="evidence" value="ECO:0007669"/>
    <property type="project" value="UniProtKB-UniRule"/>
</dbReference>
<dbReference type="GO" id="GO:0009228">
    <property type="term" value="P:thiamine biosynthetic process"/>
    <property type="evidence" value="ECO:0007669"/>
    <property type="project" value="UniProtKB-UniRule"/>
</dbReference>
<dbReference type="CDD" id="cd02007">
    <property type="entry name" value="TPP_DXS"/>
    <property type="match status" value="1"/>
</dbReference>
<dbReference type="CDD" id="cd07033">
    <property type="entry name" value="TPP_PYR_DXS_TK_like"/>
    <property type="match status" value="1"/>
</dbReference>
<dbReference type="FunFam" id="3.40.50.970:FF:000005">
    <property type="entry name" value="1-deoxy-D-xylulose-5-phosphate synthase"/>
    <property type="match status" value="1"/>
</dbReference>
<dbReference type="Gene3D" id="3.40.50.920">
    <property type="match status" value="1"/>
</dbReference>
<dbReference type="Gene3D" id="3.40.50.970">
    <property type="match status" value="2"/>
</dbReference>
<dbReference type="HAMAP" id="MF_00315">
    <property type="entry name" value="DXP_synth"/>
    <property type="match status" value="1"/>
</dbReference>
<dbReference type="InterPro" id="IPR005477">
    <property type="entry name" value="Dxylulose-5-P_synthase"/>
</dbReference>
<dbReference type="InterPro" id="IPR029061">
    <property type="entry name" value="THDP-binding"/>
</dbReference>
<dbReference type="InterPro" id="IPR009014">
    <property type="entry name" value="Transketo_C/PFOR_II"/>
</dbReference>
<dbReference type="InterPro" id="IPR005475">
    <property type="entry name" value="Transketolase-like_Pyr-bd"/>
</dbReference>
<dbReference type="InterPro" id="IPR020826">
    <property type="entry name" value="Transketolase_BS"/>
</dbReference>
<dbReference type="InterPro" id="IPR033248">
    <property type="entry name" value="Transketolase_C"/>
</dbReference>
<dbReference type="InterPro" id="IPR049557">
    <property type="entry name" value="Transketolase_CS"/>
</dbReference>
<dbReference type="NCBIfam" id="TIGR00204">
    <property type="entry name" value="dxs"/>
    <property type="match status" value="1"/>
</dbReference>
<dbReference type="NCBIfam" id="NF003933">
    <property type="entry name" value="PRK05444.2-2"/>
    <property type="match status" value="1"/>
</dbReference>
<dbReference type="PANTHER" id="PTHR43322">
    <property type="entry name" value="1-D-DEOXYXYLULOSE 5-PHOSPHATE SYNTHASE-RELATED"/>
    <property type="match status" value="1"/>
</dbReference>
<dbReference type="PANTHER" id="PTHR43322:SF5">
    <property type="entry name" value="1-DEOXY-D-XYLULOSE-5-PHOSPHATE SYNTHASE, CHLOROPLASTIC"/>
    <property type="match status" value="1"/>
</dbReference>
<dbReference type="Pfam" id="PF13292">
    <property type="entry name" value="DXP_synthase_N"/>
    <property type="match status" value="1"/>
</dbReference>
<dbReference type="Pfam" id="PF02779">
    <property type="entry name" value="Transket_pyr"/>
    <property type="match status" value="1"/>
</dbReference>
<dbReference type="Pfam" id="PF02780">
    <property type="entry name" value="Transketolase_C"/>
    <property type="match status" value="1"/>
</dbReference>
<dbReference type="SMART" id="SM00861">
    <property type="entry name" value="Transket_pyr"/>
    <property type="match status" value="1"/>
</dbReference>
<dbReference type="SUPFAM" id="SSF52518">
    <property type="entry name" value="Thiamin diphosphate-binding fold (THDP-binding)"/>
    <property type="match status" value="2"/>
</dbReference>
<dbReference type="SUPFAM" id="SSF52922">
    <property type="entry name" value="TK C-terminal domain-like"/>
    <property type="match status" value="1"/>
</dbReference>
<dbReference type="PROSITE" id="PS00801">
    <property type="entry name" value="TRANSKETOLASE_1"/>
    <property type="match status" value="1"/>
</dbReference>
<dbReference type="PROSITE" id="PS00802">
    <property type="entry name" value="TRANSKETOLASE_2"/>
    <property type="match status" value="1"/>
</dbReference>
<comment type="function">
    <text evidence="1">Catalyzes the acyloin condensation reaction between C atoms 2 and 3 of pyruvate and glyceraldehyde 3-phosphate to yield 1-deoxy-D-xylulose-5-phosphate (DXP).</text>
</comment>
<comment type="catalytic activity">
    <reaction evidence="1">
        <text>D-glyceraldehyde 3-phosphate + pyruvate + H(+) = 1-deoxy-D-xylulose 5-phosphate + CO2</text>
        <dbReference type="Rhea" id="RHEA:12605"/>
        <dbReference type="ChEBI" id="CHEBI:15361"/>
        <dbReference type="ChEBI" id="CHEBI:15378"/>
        <dbReference type="ChEBI" id="CHEBI:16526"/>
        <dbReference type="ChEBI" id="CHEBI:57792"/>
        <dbReference type="ChEBI" id="CHEBI:59776"/>
        <dbReference type="EC" id="2.2.1.7"/>
    </reaction>
</comment>
<comment type="cofactor">
    <cofactor evidence="1">
        <name>Mg(2+)</name>
        <dbReference type="ChEBI" id="CHEBI:18420"/>
    </cofactor>
    <text evidence="1">Binds 1 Mg(2+) ion per subunit.</text>
</comment>
<comment type="cofactor">
    <cofactor evidence="1">
        <name>thiamine diphosphate</name>
        <dbReference type="ChEBI" id="CHEBI:58937"/>
    </cofactor>
    <text evidence="1">Binds 1 thiamine pyrophosphate per subunit.</text>
</comment>
<comment type="pathway">
    <text evidence="1">Metabolic intermediate biosynthesis; 1-deoxy-D-xylulose 5-phosphate biosynthesis; 1-deoxy-D-xylulose 5-phosphate from D-glyceraldehyde 3-phosphate and pyruvate: step 1/1.</text>
</comment>
<comment type="subunit">
    <text evidence="1">Homodimer.</text>
</comment>
<comment type="similarity">
    <text evidence="1">Belongs to the transketolase family. DXPS subfamily.</text>
</comment>
<reference key="1">
    <citation type="submission" date="2007-12" db="EMBL/GenBank/DDBJ databases">
        <title>Complete sequence of chromosome of Francisella philomiragia subsp. philomiragia ATCC 25017.</title>
        <authorList>
            <consortium name="US DOE Joint Genome Institute"/>
            <person name="Copeland A."/>
            <person name="Lucas S."/>
            <person name="Lapidus A."/>
            <person name="Barry K."/>
            <person name="Detter J.C."/>
            <person name="Glavina del Rio T."/>
            <person name="Hammon N."/>
            <person name="Israni S."/>
            <person name="Dalin E."/>
            <person name="Tice H."/>
            <person name="Pitluck S."/>
            <person name="Chain P."/>
            <person name="Malfatti S."/>
            <person name="Shin M."/>
            <person name="Vergez L."/>
            <person name="Schmutz J."/>
            <person name="Larimer F."/>
            <person name="Land M."/>
            <person name="Hauser L."/>
            <person name="Richardson P."/>
        </authorList>
    </citation>
    <scope>NUCLEOTIDE SEQUENCE [LARGE SCALE GENOMIC DNA]</scope>
    <source>
        <strain>ATCC 25017 / CCUG 19701 / FSC 153 / O#319-036</strain>
    </source>
</reference>
<feature type="chain" id="PRO_1000079091" description="1-deoxy-D-xylulose-5-phosphate synthase">
    <location>
        <begin position="1"/>
        <end position="618"/>
    </location>
</feature>
<feature type="binding site" evidence="1">
    <location>
        <position position="76"/>
    </location>
    <ligand>
        <name>thiamine diphosphate</name>
        <dbReference type="ChEBI" id="CHEBI:58937"/>
    </ligand>
</feature>
<feature type="binding site" evidence="1">
    <location>
        <begin position="117"/>
        <end position="119"/>
    </location>
    <ligand>
        <name>thiamine diphosphate</name>
        <dbReference type="ChEBI" id="CHEBI:58937"/>
    </ligand>
</feature>
<feature type="binding site" evidence="1">
    <location>
        <position position="148"/>
    </location>
    <ligand>
        <name>Mg(2+)</name>
        <dbReference type="ChEBI" id="CHEBI:18420"/>
    </ligand>
</feature>
<feature type="binding site" evidence="1">
    <location>
        <begin position="149"/>
        <end position="150"/>
    </location>
    <ligand>
        <name>thiamine diphosphate</name>
        <dbReference type="ChEBI" id="CHEBI:58937"/>
    </ligand>
</feature>
<feature type="binding site" evidence="1">
    <location>
        <position position="177"/>
    </location>
    <ligand>
        <name>Mg(2+)</name>
        <dbReference type="ChEBI" id="CHEBI:18420"/>
    </ligand>
</feature>
<feature type="binding site" evidence="1">
    <location>
        <position position="177"/>
    </location>
    <ligand>
        <name>thiamine diphosphate</name>
        <dbReference type="ChEBI" id="CHEBI:58937"/>
    </ligand>
</feature>
<feature type="binding site" evidence="1">
    <location>
        <position position="284"/>
    </location>
    <ligand>
        <name>thiamine diphosphate</name>
        <dbReference type="ChEBI" id="CHEBI:58937"/>
    </ligand>
</feature>
<feature type="binding site" evidence="1">
    <location>
        <position position="364"/>
    </location>
    <ligand>
        <name>thiamine diphosphate</name>
        <dbReference type="ChEBI" id="CHEBI:58937"/>
    </ligand>
</feature>
<proteinExistence type="inferred from homology"/>